<dbReference type="EMBL" id="AB121200">
    <property type="protein sequence ID" value="BAD13407.1"/>
    <property type="status" value="ALT_INIT"/>
    <property type="molecule type" value="mRNA"/>
</dbReference>
<dbReference type="SMR" id="Q75WH1"/>
<dbReference type="ArachnoServer" id="AS000415">
    <property type="toxin name" value="mu-hexatoxin-Mg1c"/>
</dbReference>
<dbReference type="GO" id="GO:0005576">
    <property type="term" value="C:extracellular region"/>
    <property type="evidence" value="ECO:0007669"/>
    <property type="project" value="UniProtKB-SubCell"/>
</dbReference>
<dbReference type="GO" id="GO:0019871">
    <property type="term" value="F:sodium channel inhibitor activity"/>
    <property type="evidence" value="ECO:0007669"/>
    <property type="project" value="InterPro"/>
</dbReference>
<dbReference type="GO" id="GO:0090729">
    <property type="term" value="F:toxin activity"/>
    <property type="evidence" value="ECO:0007669"/>
    <property type="project" value="UniProtKB-KW"/>
</dbReference>
<dbReference type="InterPro" id="IPR012627">
    <property type="entry name" value="Toxin_22"/>
</dbReference>
<dbReference type="Pfam" id="PF08092">
    <property type="entry name" value="Toxin_22"/>
    <property type="match status" value="1"/>
</dbReference>
<name>TXPT6_MACGS</name>
<comment type="function">
    <text evidence="1">Inhibits voltage-gated sodium channels by binding to site 3. Insecticidal neurotoxin (By similarity).</text>
</comment>
<comment type="subcellular location">
    <subcellularLocation>
        <location evidence="1">Secreted</location>
    </subcellularLocation>
</comment>
<comment type="tissue specificity">
    <text>Expressed by the venom gland.</text>
</comment>
<comment type="domain">
    <text evidence="1">The presence of a 'disulfide through disulfide knot' structurally defines this protein as a knottin.</text>
</comment>
<comment type="similarity">
    <text evidence="3">Belongs to the neurotoxin 14 (magi-1) family. 09 (magi-1) subfamily.</text>
</comment>
<comment type="sequence caution" evidence="3">
    <conflict type="erroneous initiation">
        <sequence resource="EMBL-CDS" id="BAD13407"/>
    </conflict>
    <text>Truncated N-terminus.</text>
</comment>
<sequence length="99" mass="11647">TSQGTTPDKVQLEVNCISNLPNNEVEETDLLRELEMIEENLFGKELSFVPEENRNSRHKRCMGYDIECNERLHCCADLECVKTSGRWWYKKTYCRRKSG</sequence>
<organism>
    <name type="scientific">Macrothele gigas</name>
    <name type="common">Japanese funnel web spider</name>
    <dbReference type="NCBI Taxonomy" id="223896"/>
    <lineage>
        <taxon>Eukaryota</taxon>
        <taxon>Metazoa</taxon>
        <taxon>Ecdysozoa</taxon>
        <taxon>Arthropoda</taxon>
        <taxon>Chelicerata</taxon>
        <taxon>Arachnida</taxon>
        <taxon>Araneae</taxon>
        <taxon>Mygalomorphae</taxon>
        <taxon>Macrothelidae</taxon>
        <taxon>Macrothele</taxon>
    </lineage>
</organism>
<reference key="1">
    <citation type="submission" date="2003-09" db="EMBL/GenBank/DDBJ databases">
        <title>cDNA encoding a peptide toxin of Macrothele gigas.</title>
        <authorList>
            <person name="Satake H."/>
            <person name="Villegas E."/>
            <person name="Corzo G."/>
        </authorList>
    </citation>
    <scope>NUCLEOTIDE SEQUENCE [MRNA]</scope>
    <source>
        <tissue>Venom gland</tissue>
    </source>
</reference>
<proteinExistence type="evidence at transcript level"/>
<keyword id="KW-0165">Cleavage on pair of basic residues</keyword>
<keyword id="KW-1015">Disulfide bond</keyword>
<keyword id="KW-0960">Knottin</keyword>
<keyword id="KW-0528">Neurotoxin</keyword>
<keyword id="KW-0964">Secreted</keyword>
<keyword id="KW-0732">Signal</keyword>
<keyword id="KW-0800">Toxin</keyword>
<protein>
    <recommendedName>
        <fullName>Mu-hexatoxin-Mg1c</fullName>
        <shortName>Mu-HXTX-Mg1c</shortName>
    </recommendedName>
    <alternativeName>
        <fullName evidence="4">Peptide toxin 6</fullName>
    </alternativeName>
</protein>
<accession>Q75WH1</accession>
<feature type="signal peptide" evidence="2">
    <location>
        <begin position="1" status="less than"/>
        <end status="unknown"/>
    </location>
</feature>
<feature type="propeptide" id="PRO_0000284759" evidence="1">
    <location>
        <begin status="unknown"/>
        <end position="60"/>
    </location>
</feature>
<feature type="chain" id="PRO_0000284760" description="Mu-hexatoxin-Mg1c">
    <location>
        <begin position="61"/>
        <end position="99"/>
    </location>
</feature>
<feature type="disulfide bond" evidence="1">
    <location>
        <begin position="61"/>
        <end position="75"/>
    </location>
</feature>
<feature type="disulfide bond" evidence="1">
    <location>
        <begin position="68"/>
        <end position="80"/>
    </location>
</feature>
<feature type="disulfide bond" evidence="1">
    <location>
        <begin position="74"/>
        <end position="94"/>
    </location>
</feature>
<feature type="non-terminal residue">
    <location>
        <position position="1"/>
    </location>
</feature>
<evidence type="ECO:0000250" key="1"/>
<evidence type="ECO:0000255" key="2"/>
<evidence type="ECO:0000305" key="3"/>
<evidence type="ECO:0000312" key="4">
    <source>
        <dbReference type="EMBL" id="BAD13407.1"/>
    </source>
</evidence>